<gene>
    <name evidence="5" type="primary">Cd59</name>
</gene>
<organism>
    <name type="scientific">Rattus norvegicus</name>
    <name type="common">Rat</name>
    <dbReference type="NCBI Taxonomy" id="10116"/>
    <lineage>
        <taxon>Eukaryota</taxon>
        <taxon>Metazoa</taxon>
        <taxon>Chordata</taxon>
        <taxon>Craniata</taxon>
        <taxon>Vertebrata</taxon>
        <taxon>Euteleostomi</taxon>
        <taxon>Mammalia</taxon>
        <taxon>Eutheria</taxon>
        <taxon>Euarchontoglires</taxon>
        <taxon>Glires</taxon>
        <taxon>Rodentia</taxon>
        <taxon>Myomorpha</taxon>
        <taxon>Muroidea</taxon>
        <taxon>Muridae</taxon>
        <taxon>Murinae</taxon>
        <taxon>Rattus</taxon>
    </lineage>
</organism>
<dbReference type="EMBL" id="U48255">
    <property type="protein sequence ID" value="AAA88909.1"/>
    <property type="molecule type" value="mRNA"/>
</dbReference>
<dbReference type="EMBL" id="BC063176">
    <property type="protein sequence ID" value="AAH63176.1"/>
    <property type="molecule type" value="mRNA"/>
</dbReference>
<dbReference type="PIR" id="S53340">
    <property type="entry name" value="S53340"/>
</dbReference>
<dbReference type="RefSeq" id="NP_037057.1">
    <property type="nucleotide sequence ID" value="NM_012925.1"/>
</dbReference>
<dbReference type="SMR" id="P27274"/>
<dbReference type="BioGRID" id="247442">
    <property type="interactions" value="1"/>
</dbReference>
<dbReference type="FunCoup" id="P27274">
    <property type="interactions" value="367"/>
</dbReference>
<dbReference type="IntAct" id="P27274">
    <property type="interactions" value="1"/>
</dbReference>
<dbReference type="STRING" id="10116.ENSRNOP00000060967"/>
<dbReference type="GlyCosmos" id="P27274">
    <property type="glycosylation" value="1 site, No reported glycans"/>
</dbReference>
<dbReference type="GlyGen" id="P27274">
    <property type="glycosylation" value="1 site"/>
</dbReference>
<dbReference type="iPTMnet" id="P27274"/>
<dbReference type="PhosphoSitePlus" id="P27274"/>
<dbReference type="SwissPalm" id="P27274"/>
<dbReference type="PaxDb" id="10116-ENSRNOP00000060967"/>
<dbReference type="Ensembl" id="ENSRNOT00000067085.4">
    <property type="protein sequence ID" value="ENSRNOP00000060967.2"/>
    <property type="gene ID" value="ENSRNOG00000042821.4"/>
</dbReference>
<dbReference type="GeneID" id="25407"/>
<dbReference type="KEGG" id="rno:25407"/>
<dbReference type="UCSC" id="RGD:2311">
    <property type="organism name" value="rat"/>
</dbReference>
<dbReference type="AGR" id="RGD:2311"/>
<dbReference type="CTD" id="333883"/>
<dbReference type="RGD" id="2311">
    <property type="gene designation" value="Cd59"/>
</dbReference>
<dbReference type="eggNOG" id="ENOG502SA4P">
    <property type="taxonomic scope" value="Eukaryota"/>
</dbReference>
<dbReference type="GeneTree" id="ENSGT00390000016309"/>
<dbReference type="HOGENOM" id="CLU_147732_1_0_1"/>
<dbReference type="InParanoid" id="P27274"/>
<dbReference type="PhylomeDB" id="P27274"/>
<dbReference type="Reactome" id="R-RNO-204005">
    <property type="pathway name" value="COPII-mediated vesicle transport"/>
</dbReference>
<dbReference type="Reactome" id="R-RNO-5694530">
    <property type="pathway name" value="Cargo concentration in the ER"/>
</dbReference>
<dbReference type="Reactome" id="R-RNO-6798695">
    <property type="pathway name" value="Neutrophil degranulation"/>
</dbReference>
<dbReference type="Reactome" id="R-RNO-6807878">
    <property type="pathway name" value="COPI-mediated anterograde transport"/>
</dbReference>
<dbReference type="PRO" id="PR:P27274"/>
<dbReference type="Proteomes" id="UP000002494">
    <property type="component" value="Chromosome 3"/>
</dbReference>
<dbReference type="Bgee" id="ENSRNOG00000042821">
    <property type="expression patterns" value="Expressed in lung and 20 other cell types or tissues"/>
</dbReference>
<dbReference type="GO" id="GO:0009986">
    <property type="term" value="C:cell surface"/>
    <property type="evidence" value="ECO:0000266"/>
    <property type="project" value="RGD"/>
</dbReference>
<dbReference type="GO" id="GO:0043218">
    <property type="term" value="C:compact myelin"/>
    <property type="evidence" value="ECO:0000314"/>
    <property type="project" value="RGD"/>
</dbReference>
<dbReference type="GO" id="GO:0009897">
    <property type="term" value="C:external side of plasma membrane"/>
    <property type="evidence" value="ECO:0000266"/>
    <property type="project" value="RGD"/>
</dbReference>
<dbReference type="GO" id="GO:0005615">
    <property type="term" value="C:extracellular space"/>
    <property type="evidence" value="ECO:0000314"/>
    <property type="project" value="RGD"/>
</dbReference>
<dbReference type="GO" id="GO:0005886">
    <property type="term" value="C:plasma membrane"/>
    <property type="evidence" value="ECO:0000266"/>
    <property type="project" value="RGD"/>
</dbReference>
<dbReference type="GO" id="GO:0042383">
    <property type="term" value="C:sarcolemma"/>
    <property type="evidence" value="ECO:0000314"/>
    <property type="project" value="RGD"/>
</dbReference>
<dbReference type="GO" id="GO:0001848">
    <property type="term" value="F:complement binding"/>
    <property type="evidence" value="ECO:0000314"/>
    <property type="project" value="RGD"/>
</dbReference>
<dbReference type="GO" id="GO:0045087">
    <property type="term" value="P:innate immune response"/>
    <property type="evidence" value="ECO:0000266"/>
    <property type="project" value="RGD"/>
</dbReference>
<dbReference type="GO" id="GO:0001971">
    <property type="term" value="P:negative regulation of activation of membrane attack complex"/>
    <property type="evidence" value="ECO:0000314"/>
    <property type="project" value="RGD"/>
</dbReference>
<dbReference type="GO" id="GO:0043066">
    <property type="term" value="P:negative regulation of apoptotic process"/>
    <property type="evidence" value="ECO:0000315"/>
    <property type="project" value="RGD"/>
</dbReference>
<dbReference type="GO" id="GO:0045916">
    <property type="term" value="P:negative regulation of complement activation"/>
    <property type="evidence" value="ECO:0000266"/>
    <property type="project" value="RGD"/>
</dbReference>
<dbReference type="GO" id="GO:1903660">
    <property type="term" value="P:negative regulation of complement-dependent cytotoxicity"/>
    <property type="evidence" value="ECO:0000315"/>
    <property type="project" value="RGD"/>
</dbReference>
<dbReference type="GO" id="GO:0042102">
    <property type="term" value="P:positive regulation of T cell proliferation"/>
    <property type="evidence" value="ECO:0000315"/>
    <property type="project" value="RGD"/>
</dbReference>
<dbReference type="GO" id="GO:0030449">
    <property type="term" value="P:regulation of complement activation"/>
    <property type="evidence" value="ECO:0000266"/>
    <property type="project" value="RGD"/>
</dbReference>
<dbReference type="GO" id="GO:1903659">
    <property type="term" value="P:regulation of complement-dependent cytotoxicity"/>
    <property type="evidence" value="ECO:0000266"/>
    <property type="project" value="RGD"/>
</dbReference>
<dbReference type="CDD" id="cd23554">
    <property type="entry name" value="TFP_LU_ECD_CD59"/>
    <property type="match status" value="1"/>
</dbReference>
<dbReference type="FunFam" id="2.10.60.10:FF:000023">
    <property type="entry name" value="CD59 glycoprotein preproprotein"/>
    <property type="match status" value="1"/>
</dbReference>
<dbReference type="Gene3D" id="2.10.60.10">
    <property type="entry name" value="CD59"/>
    <property type="match status" value="1"/>
</dbReference>
<dbReference type="InterPro" id="IPR056949">
    <property type="entry name" value="CD59"/>
</dbReference>
<dbReference type="InterPro" id="IPR018363">
    <property type="entry name" value="CD59_antigen_CS"/>
</dbReference>
<dbReference type="InterPro" id="IPR050918">
    <property type="entry name" value="CNF-like_PLA2_Inhibitor"/>
</dbReference>
<dbReference type="InterPro" id="IPR016054">
    <property type="entry name" value="LY6_UPA_recep-like"/>
</dbReference>
<dbReference type="InterPro" id="IPR045860">
    <property type="entry name" value="Snake_toxin-like_sf"/>
</dbReference>
<dbReference type="PANTHER" id="PTHR20914:SF9">
    <property type="entry name" value="COILED, ISOFORM A"/>
    <property type="match status" value="1"/>
</dbReference>
<dbReference type="PANTHER" id="PTHR20914">
    <property type="entry name" value="LY6/PLAUR DOMAIN-CONTAINING PROTEIN 8"/>
    <property type="match status" value="1"/>
</dbReference>
<dbReference type="Pfam" id="PF25152">
    <property type="entry name" value="CD59"/>
    <property type="match status" value="1"/>
</dbReference>
<dbReference type="SMART" id="SM00134">
    <property type="entry name" value="LU"/>
    <property type="match status" value="1"/>
</dbReference>
<dbReference type="SUPFAM" id="SSF57302">
    <property type="entry name" value="Snake toxin-like"/>
    <property type="match status" value="1"/>
</dbReference>
<dbReference type="PROSITE" id="PS00983">
    <property type="entry name" value="LY6_UPAR"/>
    <property type="match status" value="1"/>
</dbReference>
<sequence length="126" mass="13790">MRARRGFILLLLLAVLCSTGVSLRCYNCLDPVSSCKTNSTCSPNLDACLVAVSGKQVYQQCWRFSDCNAKFILSRLEIANVQYRCCQADLCNKSFEDKPNNGAISLLGKTALLVTSVLAAILKPCF</sequence>
<accession>P27274</accession>
<proteinExistence type="evidence at protein level"/>
<name>CD59_RAT</name>
<keyword id="KW-1003">Cell membrane</keyword>
<keyword id="KW-0903">Direct protein sequencing</keyword>
<keyword id="KW-1015">Disulfide bond</keyword>
<keyword id="KW-0325">Glycoprotein</keyword>
<keyword id="KW-0336">GPI-anchor</keyword>
<keyword id="KW-0449">Lipoprotein</keyword>
<keyword id="KW-0472">Membrane</keyword>
<keyword id="KW-1185">Reference proteome</keyword>
<keyword id="KW-0964">Secreted</keyword>
<keyword id="KW-0732">Signal</keyword>
<feature type="signal peptide" evidence="3 4">
    <location>
        <begin position="1"/>
        <end position="22"/>
    </location>
</feature>
<feature type="chain" id="PRO_0000036124" description="CD59 glycoprotein">
    <location>
        <begin position="23"/>
        <end position="101"/>
    </location>
</feature>
<feature type="propeptide" id="PRO_0000036125" description="Removed in mature form" evidence="1">
    <location>
        <begin position="102"/>
        <end position="126"/>
    </location>
</feature>
<feature type="domain" description="UPAR/Ly6">
    <location>
        <begin position="23"/>
        <end position="110"/>
    </location>
</feature>
<feature type="lipid moiety-binding region" description="GPI-anchor amidated asparagine" evidence="1">
    <location>
        <position position="101"/>
    </location>
</feature>
<feature type="glycosylation site" description="N-linked (GlcNAc...) asparagine" evidence="2">
    <location>
        <position position="38"/>
    </location>
</feature>
<feature type="disulfide bond" evidence="1">
    <location>
        <begin position="25"/>
        <end position="48"/>
    </location>
</feature>
<feature type="disulfide bond" evidence="1">
    <location>
        <begin position="28"/>
        <end position="35"/>
    </location>
</feature>
<feature type="disulfide bond" evidence="1">
    <location>
        <begin position="41"/>
        <end position="61"/>
    </location>
</feature>
<feature type="disulfide bond" evidence="1">
    <location>
        <begin position="67"/>
        <end position="85"/>
    </location>
</feature>
<feature type="disulfide bond" evidence="1">
    <location>
        <begin position="86"/>
        <end position="91"/>
    </location>
</feature>
<evidence type="ECO:0000250" key="1">
    <source>
        <dbReference type="UniProtKB" id="P13987"/>
    </source>
</evidence>
<evidence type="ECO:0000255" key="2"/>
<evidence type="ECO:0000269" key="3">
    <source>
    </source>
</evidence>
<evidence type="ECO:0000269" key="4">
    <source>
    </source>
</evidence>
<evidence type="ECO:0000303" key="5">
    <source>
    </source>
</evidence>
<comment type="function">
    <text evidence="1">Potent inhibitor of the complement membrane attack complex (MAC) action, which protects self-cells from damage during complement activation. Acts by binding to the beta-haipins of C8 (C8A and C8B) components of the assembling MAC, forming an intermolecular beta-sheet that prevents incorporation of the multiple copies of C9 required for complete formation of the osmolytic pore.</text>
</comment>
<comment type="subunit">
    <text evidence="1">Interacts with T-cell surface antigen CD2.</text>
</comment>
<comment type="subcellular location">
    <subcellularLocation>
        <location evidence="1">Cell membrane</location>
        <topology evidence="1">Lipid-anchor</topology>
        <topology evidence="1">GPI-anchor</topology>
    </subcellularLocation>
    <subcellularLocation>
        <location evidence="1">Secreted</location>
    </subcellularLocation>
    <text evidence="1">Localizes to the cell surface. Soluble form found in a number of tissues.</text>
</comment>
<comment type="PTM">
    <text evidence="1">N- and O-glycosylated.</text>
</comment>
<reference key="1">
    <citation type="journal article" date="1994" name="Biochem. J.">
        <title>Molecular cloning of the rat analogue of human CD59: structural comparison with human CD59 and identification of a putative active site.</title>
        <authorList>
            <person name="Rushmere N.K."/>
            <person name="Harrison R.A."/>
            <person name="van den Berg C.W."/>
            <person name="Morgan B.P."/>
        </authorList>
    </citation>
    <scope>NUCLEOTIDE SEQUENCE [MRNA]</scope>
    <scope>PROTEIN SEQUENCE OF 23-64</scope>
    <source>
        <strain>Sprague-Dawley</strain>
        <tissue>Kidney</tissue>
    </source>
</reference>
<reference key="2">
    <citation type="journal article" date="2004" name="Genome Res.">
        <title>The status, quality, and expansion of the NIH full-length cDNA project: the Mammalian Gene Collection (MGC).</title>
        <authorList>
            <consortium name="The MGC Project Team"/>
        </authorList>
    </citation>
    <scope>NUCLEOTIDE SEQUENCE [LARGE SCALE MRNA]</scope>
    <source>
        <tissue>Pituitary</tissue>
    </source>
</reference>
<reference key="3">
    <citation type="journal article" date="1992" name="Biochem. J.">
        <title>Isolation and characterization of a membrane protein from rat erythrocytes which inhibits lysis by the membrane attack complex of rat complement.</title>
        <authorList>
            <person name="Hughes T.R."/>
            <person name="Piddlesden S.J."/>
            <person name="Willams J.D."/>
            <person name="Harrison R.A."/>
            <person name="Morgan B.P."/>
        </authorList>
    </citation>
    <scope>PROTEIN SEQUENCE OF 23-37</scope>
    <source>
        <tissue>Erythrocyte</tissue>
    </source>
</reference>
<protein>
    <recommendedName>
        <fullName>CD59 glycoprotein</fullName>
    </recommendedName>
    <alternativeName>
        <fullName>MAC-inhibitory protein</fullName>
        <shortName>MAC-IP</shortName>
    </alternativeName>
    <alternativeName>
        <fullName>Membrane attack complex inhibition factor</fullName>
        <shortName>MACIF</shortName>
    </alternativeName>
    <alternativeName>
        <fullName>Protectin</fullName>
    </alternativeName>
    <cdAntigenName>CD59</cdAntigenName>
</protein>